<organism>
    <name type="scientific">Rattus norvegicus</name>
    <name type="common">Rat</name>
    <dbReference type="NCBI Taxonomy" id="10116"/>
    <lineage>
        <taxon>Eukaryota</taxon>
        <taxon>Metazoa</taxon>
        <taxon>Chordata</taxon>
        <taxon>Craniata</taxon>
        <taxon>Vertebrata</taxon>
        <taxon>Euteleostomi</taxon>
        <taxon>Mammalia</taxon>
        <taxon>Eutheria</taxon>
        <taxon>Euarchontoglires</taxon>
        <taxon>Glires</taxon>
        <taxon>Rodentia</taxon>
        <taxon>Myomorpha</taxon>
        <taxon>Muroidea</taxon>
        <taxon>Muridae</taxon>
        <taxon>Murinae</taxon>
        <taxon>Rattus</taxon>
    </lineage>
</organism>
<gene>
    <name type="primary">Nlrc4</name>
    <name type="synonym">Ipaf</name>
</gene>
<proteinExistence type="inferred from homology"/>
<reference key="1">
    <citation type="journal article" date="2004" name="Nature">
        <title>Genome sequence of the Brown Norway rat yields insights into mammalian evolution.</title>
        <authorList>
            <person name="Gibbs R.A."/>
            <person name="Weinstock G.M."/>
            <person name="Metzker M.L."/>
            <person name="Muzny D.M."/>
            <person name="Sodergren E.J."/>
            <person name="Scherer S."/>
            <person name="Scott G."/>
            <person name="Steffen D."/>
            <person name="Worley K.C."/>
            <person name="Burch P.E."/>
            <person name="Okwuonu G."/>
            <person name="Hines S."/>
            <person name="Lewis L."/>
            <person name="Deramo C."/>
            <person name="Delgado O."/>
            <person name="Dugan-Rocha S."/>
            <person name="Miner G."/>
            <person name="Morgan M."/>
            <person name="Hawes A."/>
            <person name="Gill R."/>
            <person name="Holt R.A."/>
            <person name="Adams M.D."/>
            <person name="Amanatides P.G."/>
            <person name="Baden-Tillson H."/>
            <person name="Barnstead M."/>
            <person name="Chin S."/>
            <person name="Evans C.A."/>
            <person name="Ferriera S."/>
            <person name="Fosler C."/>
            <person name="Glodek A."/>
            <person name="Gu Z."/>
            <person name="Jennings D."/>
            <person name="Kraft C.L."/>
            <person name="Nguyen T."/>
            <person name="Pfannkoch C.M."/>
            <person name="Sitter C."/>
            <person name="Sutton G.G."/>
            <person name="Venter J.C."/>
            <person name="Woodage T."/>
            <person name="Smith D."/>
            <person name="Lee H.-M."/>
            <person name="Gustafson E."/>
            <person name="Cahill P."/>
            <person name="Kana A."/>
            <person name="Doucette-Stamm L."/>
            <person name="Weinstock K."/>
            <person name="Fechtel K."/>
            <person name="Weiss R.B."/>
            <person name="Dunn D.M."/>
            <person name="Green E.D."/>
            <person name="Blakesley R.W."/>
            <person name="Bouffard G.G."/>
            <person name="De Jong P.J."/>
            <person name="Osoegawa K."/>
            <person name="Zhu B."/>
            <person name="Marra M."/>
            <person name="Schein J."/>
            <person name="Bosdet I."/>
            <person name="Fjell C."/>
            <person name="Jones S."/>
            <person name="Krzywinski M."/>
            <person name="Mathewson C."/>
            <person name="Siddiqui A."/>
            <person name="Wye N."/>
            <person name="McPherson J."/>
            <person name="Zhao S."/>
            <person name="Fraser C.M."/>
            <person name="Shetty J."/>
            <person name="Shatsman S."/>
            <person name="Geer K."/>
            <person name="Chen Y."/>
            <person name="Abramzon S."/>
            <person name="Nierman W.C."/>
            <person name="Havlak P.H."/>
            <person name="Chen R."/>
            <person name="Durbin K.J."/>
            <person name="Egan A."/>
            <person name="Ren Y."/>
            <person name="Song X.-Z."/>
            <person name="Li B."/>
            <person name="Liu Y."/>
            <person name="Qin X."/>
            <person name="Cawley S."/>
            <person name="Cooney A.J."/>
            <person name="D'Souza L.M."/>
            <person name="Martin K."/>
            <person name="Wu J.Q."/>
            <person name="Gonzalez-Garay M.L."/>
            <person name="Jackson A.R."/>
            <person name="Kalafus K.J."/>
            <person name="McLeod M.P."/>
            <person name="Milosavljevic A."/>
            <person name="Virk D."/>
            <person name="Volkov A."/>
            <person name="Wheeler D.A."/>
            <person name="Zhang Z."/>
            <person name="Bailey J.A."/>
            <person name="Eichler E.E."/>
            <person name="Tuzun E."/>
            <person name="Birney E."/>
            <person name="Mongin E."/>
            <person name="Ureta-Vidal A."/>
            <person name="Woodwark C."/>
            <person name="Zdobnov E."/>
            <person name="Bork P."/>
            <person name="Suyama M."/>
            <person name="Torrents D."/>
            <person name="Alexandersson M."/>
            <person name="Trask B.J."/>
            <person name="Young J.M."/>
            <person name="Huang H."/>
            <person name="Wang H."/>
            <person name="Xing H."/>
            <person name="Daniels S."/>
            <person name="Gietzen D."/>
            <person name="Schmidt J."/>
            <person name="Stevens K."/>
            <person name="Vitt U."/>
            <person name="Wingrove J."/>
            <person name="Camara F."/>
            <person name="Mar Alba M."/>
            <person name="Abril J.F."/>
            <person name="Guigo R."/>
            <person name="Smit A."/>
            <person name="Dubchak I."/>
            <person name="Rubin E.M."/>
            <person name="Couronne O."/>
            <person name="Poliakov A."/>
            <person name="Huebner N."/>
            <person name="Ganten D."/>
            <person name="Goesele C."/>
            <person name="Hummel O."/>
            <person name="Kreitler T."/>
            <person name="Lee Y.-A."/>
            <person name="Monti J."/>
            <person name="Schulz H."/>
            <person name="Zimdahl H."/>
            <person name="Himmelbauer H."/>
            <person name="Lehrach H."/>
            <person name="Jacob H.J."/>
            <person name="Bromberg S."/>
            <person name="Gullings-Handley J."/>
            <person name="Jensen-Seaman M.I."/>
            <person name="Kwitek A.E."/>
            <person name="Lazar J."/>
            <person name="Pasko D."/>
            <person name="Tonellato P.J."/>
            <person name="Twigger S."/>
            <person name="Ponting C.P."/>
            <person name="Duarte J.M."/>
            <person name="Rice S."/>
            <person name="Goodstadt L."/>
            <person name="Beatson S.A."/>
            <person name="Emes R.D."/>
            <person name="Winter E.E."/>
            <person name="Webber C."/>
            <person name="Brandt P."/>
            <person name="Nyakatura G."/>
            <person name="Adetobi M."/>
            <person name="Chiaromonte F."/>
            <person name="Elnitski L."/>
            <person name="Eswara P."/>
            <person name="Hardison R.C."/>
            <person name="Hou M."/>
            <person name="Kolbe D."/>
            <person name="Makova K."/>
            <person name="Miller W."/>
            <person name="Nekrutenko A."/>
            <person name="Riemer C."/>
            <person name="Schwartz S."/>
            <person name="Taylor J."/>
            <person name="Yang S."/>
            <person name="Zhang Y."/>
            <person name="Lindpaintner K."/>
            <person name="Andrews T.D."/>
            <person name="Caccamo M."/>
            <person name="Clamp M."/>
            <person name="Clarke L."/>
            <person name="Curwen V."/>
            <person name="Durbin R.M."/>
            <person name="Eyras E."/>
            <person name="Searle S.M."/>
            <person name="Cooper G.M."/>
            <person name="Batzoglou S."/>
            <person name="Brudno M."/>
            <person name="Sidow A."/>
            <person name="Stone E.A."/>
            <person name="Payseur B.A."/>
            <person name="Bourque G."/>
            <person name="Lopez-Otin C."/>
            <person name="Puente X.S."/>
            <person name="Chakrabarti K."/>
            <person name="Chatterji S."/>
            <person name="Dewey C."/>
            <person name="Pachter L."/>
            <person name="Bray N."/>
            <person name="Yap V.B."/>
            <person name="Caspi A."/>
            <person name="Tesler G."/>
            <person name="Pevzner P.A."/>
            <person name="Haussler D."/>
            <person name="Roskin K.M."/>
            <person name="Baertsch R."/>
            <person name="Clawson H."/>
            <person name="Furey T.S."/>
            <person name="Hinrichs A.S."/>
            <person name="Karolchik D."/>
            <person name="Kent W.J."/>
            <person name="Rosenbloom K.R."/>
            <person name="Trumbower H."/>
            <person name="Weirauch M."/>
            <person name="Cooper D.N."/>
            <person name="Stenson P.D."/>
            <person name="Ma B."/>
            <person name="Brent M."/>
            <person name="Arumugam M."/>
            <person name="Shteynberg D."/>
            <person name="Copley R.R."/>
            <person name="Taylor M.S."/>
            <person name="Riethman H."/>
            <person name="Mudunuri U."/>
            <person name="Peterson J."/>
            <person name="Guyer M."/>
            <person name="Felsenfeld A."/>
            <person name="Old S."/>
            <person name="Mockrin S."/>
            <person name="Collins F.S."/>
        </authorList>
    </citation>
    <scope>NUCLEOTIDE SEQUENCE [LARGE SCALE GENOMIC DNA]</scope>
    <source>
        <strain>Brown Norway</strain>
    </source>
</reference>
<name>NLRC4_RAT</name>
<accession>F1M649</accession>
<feature type="chain" id="PRO_0000419976" description="NLR family CARD domain-containing protein 4">
    <location>
        <begin position="1"/>
        <end position="1023"/>
    </location>
</feature>
<feature type="domain" description="CARD" evidence="4">
    <location>
        <begin position="1"/>
        <end position="88"/>
    </location>
</feature>
<feature type="domain" description="NACHT" evidence="5">
    <location>
        <begin position="163"/>
        <end position="476"/>
    </location>
</feature>
<feature type="repeat" description="LRR 1">
    <location>
        <begin position="578"/>
        <end position="598"/>
    </location>
</feature>
<feature type="repeat" description="LRR 2">
    <location>
        <begin position="655"/>
        <end position="678"/>
    </location>
</feature>
<feature type="repeat" description="LRR 3">
    <location>
        <begin position="734"/>
        <end position="757"/>
    </location>
</feature>
<feature type="repeat" description="LRR 4">
    <location>
        <begin position="761"/>
        <end position="784"/>
    </location>
</feature>
<feature type="repeat" description="LRR 5">
    <location>
        <begin position="786"/>
        <end position="811"/>
    </location>
</feature>
<feature type="repeat" description="LRR 6">
    <location>
        <begin position="823"/>
        <end position="846"/>
    </location>
</feature>
<feature type="repeat" description="LRR 7">
    <location>
        <begin position="847"/>
        <end position="869"/>
    </location>
</feature>
<feature type="repeat" description="LRR 8">
    <location>
        <begin position="877"/>
        <end position="901"/>
    </location>
</feature>
<feature type="repeat" description="LRR 9">
    <location>
        <begin position="910"/>
        <end position="932"/>
    </location>
</feature>
<feature type="repeat" description="LRR 10">
    <location>
        <begin position="935"/>
        <end position="962"/>
    </location>
</feature>
<feature type="repeat" description="LRR 11">
    <location>
        <begin position="964"/>
        <end position="984"/>
    </location>
</feature>
<feature type="repeat" description="LRR 12">
    <location>
        <begin position="998"/>
        <end position="1020"/>
    </location>
</feature>
<feature type="region of interest" description="Nucleotide-binding domain (NBD)" evidence="1">
    <location>
        <begin position="95"/>
        <end position="298"/>
    </location>
</feature>
<feature type="region of interest" description="Winged-helix domain (WHD)" evidence="1">
    <location>
        <begin position="356"/>
        <end position="463"/>
    </location>
</feature>
<feature type="binding site" evidence="5">
    <location>
        <begin position="169"/>
        <end position="176"/>
    </location>
    <ligand>
        <name>ATP</name>
        <dbReference type="ChEBI" id="CHEBI:30616"/>
    </ligand>
</feature>
<feature type="modified residue" description="Phosphoserine" evidence="2">
    <location>
        <position position="533"/>
    </location>
</feature>
<comment type="function">
    <text evidence="2">Key component of inflammasomes that indirectly senses specific proteins from pathogenic bacteria and fungi and responds by assembling an inflammasome complex that promotes caspase-1 activation, cytokine production and macrophage pyroptosis. The NLRC4 inflammasome is activated as part of the innate immune response to a range of intracellular bacteria.</text>
</comment>
<comment type="subunit">
    <text evidence="2 3">Homooligomer; homooligomerizes following activation of Naip proteins by pathogenic proteins such as S.typhimurium (Salmonella) flagellin or PrgJ. Component of the NLRC4 inflammasome, at least composed of NLRC4, caspase-1 (CASP1) and some NAIP family member (By similarity). Interacts with EIF2AK2/PKR (By similarity).</text>
</comment>
<comment type="subcellular location">
    <subcellularLocation>
        <location evidence="2">Cytoplasm</location>
        <location evidence="2">Cytosol</location>
    </subcellularLocation>
</comment>
<comment type="domain">
    <text evidence="2">In an autoinhibited form the C-terminal leucine-rich repeat (LRR) domain is positioned to sterically occlude one side of the NBD domain and consequently sequester NLRC4 in a monomeric state. An ADP-mediated interaction between the NBD and the WHD also contributes to the autoinhibition.</text>
</comment>
<comment type="PTM">
    <text evidence="2">Phosphorylated at Ser-533 following infection of macrophages with S.typhimurium (Salmonella). Phosphorylation is essential for NLRC4 inflammasome function to promote caspase-1 activation and pyroptosis. PRKCD phosphorylates Ser-533 in vitro.</text>
</comment>
<dbReference type="RefSeq" id="NP_001296361.1">
    <property type="nucleotide sequence ID" value="NM_001309432.1"/>
</dbReference>
<dbReference type="RefSeq" id="XP_008762713.1">
    <property type="nucleotide sequence ID" value="XM_008764491.4"/>
</dbReference>
<dbReference type="SMR" id="F1M649"/>
<dbReference type="FunCoup" id="F1M649">
    <property type="interactions" value="198"/>
</dbReference>
<dbReference type="STRING" id="10116.ENSRNOP00000007655"/>
<dbReference type="PhosphoSitePlus" id="F1M649"/>
<dbReference type="PaxDb" id="10116-ENSRNOP00000007655"/>
<dbReference type="Ensembl" id="ENSRNOT00000007655.8">
    <property type="protein sequence ID" value="ENSRNOP00000007655.6"/>
    <property type="gene ID" value="ENSRNOG00000005810.8"/>
</dbReference>
<dbReference type="GeneID" id="298784"/>
<dbReference type="KEGG" id="rno:298784"/>
<dbReference type="UCSC" id="RGD:1309831">
    <property type="organism name" value="rat"/>
</dbReference>
<dbReference type="AGR" id="RGD:1309831"/>
<dbReference type="CTD" id="58484"/>
<dbReference type="RGD" id="1309831">
    <property type="gene designation" value="Nlrc4"/>
</dbReference>
<dbReference type="eggNOG" id="ENOG502QWRJ">
    <property type="taxonomic scope" value="Eukaryota"/>
</dbReference>
<dbReference type="GeneTree" id="ENSGT00940000161744"/>
<dbReference type="HOGENOM" id="CLU_011683_0_0_1"/>
<dbReference type="InParanoid" id="F1M649"/>
<dbReference type="OMA" id="KDWYHTP"/>
<dbReference type="OrthoDB" id="120976at2759"/>
<dbReference type="PRO" id="PR:F1M649"/>
<dbReference type="Proteomes" id="UP000002494">
    <property type="component" value="Chromosome 6"/>
</dbReference>
<dbReference type="Bgee" id="ENSRNOG00000005810">
    <property type="expression patterns" value="Expressed in duodenum and 14 other cell types or tissues"/>
</dbReference>
<dbReference type="GO" id="GO:0005829">
    <property type="term" value="C:cytosol"/>
    <property type="evidence" value="ECO:0000250"/>
    <property type="project" value="UniProtKB"/>
</dbReference>
<dbReference type="GO" id="GO:0043231">
    <property type="term" value="C:intracellular membrane-bounded organelle"/>
    <property type="evidence" value="ECO:0007669"/>
    <property type="project" value="Ensembl"/>
</dbReference>
<dbReference type="GO" id="GO:0072557">
    <property type="term" value="C:IPAF inflammasome complex"/>
    <property type="evidence" value="ECO:0000250"/>
    <property type="project" value="UniProtKB"/>
</dbReference>
<dbReference type="GO" id="GO:0005886">
    <property type="term" value="C:plasma membrane"/>
    <property type="evidence" value="ECO:0007669"/>
    <property type="project" value="Ensembl"/>
</dbReference>
<dbReference type="GO" id="GO:0005524">
    <property type="term" value="F:ATP binding"/>
    <property type="evidence" value="ECO:0000266"/>
    <property type="project" value="RGD"/>
</dbReference>
<dbReference type="GO" id="GO:0089720">
    <property type="term" value="F:caspase binding"/>
    <property type="evidence" value="ECO:0000266"/>
    <property type="project" value="RGD"/>
</dbReference>
<dbReference type="GO" id="GO:0061133">
    <property type="term" value="F:endopeptidase activator activity"/>
    <property type="evidence" value="ECO:0000266"/>
    <property type="project" value="RGD"/>
</dbReference>
<dbReference type="GO" id="GO:0042802">
    <property type="term" value="F:identical protein binding"/>
    <property type="evidence" value="ECO:0000266"/>
    <property type="project" value="RGD"/>
</dbReference>
<dbReference type="GO" id="GO:0042803">
    <property type="term" value="F:protein homodimerization activity"/>
    <property type="evidence" value="ECO:0000266"/>
    <property type="project" value="RGD"/>
</dbReference>
<dbReference type="GO" id="GO:0002218">
    <property type="term" value="P:activation of innate immune response"/>
    <property type="evidence" value="ECO:0000250"/>
    <property type="project" value="UniProtKB"/>
</dbReference>
<dbReference type="GO" id="GO:0006915">
    <property type="term" value="P:apoptotic process"/>
    <property type="evidence" value="ECO:0007669"/>
    <property type="project" value="UniProtKB-KW"/>
</dbReference>
<dbReference type="GO" id="GO:0042742">
    <property type="term" value="P:defense response to bacterium"/>
    <property type="evidence" value="ECO:0000250"/>
    <property type="project" value="UniProtKB"/>
</dbReference>
<dbReference type="GO" id="GO:0016045">
    <property type="term" value="P:detection of bacterium"/>
    <property type="evidence" value="ECO:0000250"/>
    <property type="project" value="UniProtKB"/>
</dbReference>
<dbReference type="GO" id="GO:0006954">
    <property type="term" value="P:inflammatory response"/>
    <property type="evidence" value="ECO:0000250"/>
    <property type="project" value="UniProtKB"/>
</dbReference>
<dbReference type="GO" id="GO:0045087">
    <property type="term" value="P:innate immune response"/>
    <property type="evidence" value="ECO:0007669"/>
    <property type="project" value="UniProtKB-KW"/>
</dbReference>
<dbReference type="GO" id="GO:0043065">
    <property type="term" value="P:positive regulation of apoptotic process"/>
    <property type="evidence" value="ECO:0000266"/>
    <property type="project" value="RGD"/>
</dbReference>
<dbReference type="GO" id="GO:0032731">
    <property type="term" value="P:positive regulation of interleukin-1 beta production"/>
    <property type="evidence" value="ECO:0000250"/>
    <property type="project" value="UniProtKB"/>
</dbReference>
<dbReference type="GO" id="GO:0010954">
    <property type="term" value="P:positive regulation of protein processing"/>
    <property type="evidence" value="ECO:0000266"/>
    <property type="project" value="RGD"/>
</dbReference>
<dbReference type="GO" id="GO:0051260">
    <property type="term" value="P:protein homooligomerization"/>
    <property type="evidence" value="ECO:0000250"/>
    <property type="project" value="UniProtKB"/>
</dbReference>
<dbReference type="GO" id="GO:0070269">
    <property type="term" value="P:pyroptotic inflammatory response"/>
    <property type="evidence" value="ECO:0000250"/>
    <property type="project" value="UniProtKB"/>
</dbReference>
<dbReference type="GO" id="GO:0042981">
    <property type="term" value="P:regulation of apoptotic process"/>
    <property type="evidence" value="ECO:0000266"/>
    <property type="project" value="RGD"/>
</dbReference>
<dbReference type="CDD" id="cd01671">
    <property type="entry name" value="CARD"/>
    <property type="match status" value="1"/>
</dbReference>
<dbReference type="FunFam" id="1.10.533.10:FF:000068">
    <property type="entry name" value="NLR family CARD domain containing 4"/>
    <property type="match status" value="1"/>
</dbReference>
<dbReference type="FunFam" id="3.80.10.10:FF:000409">
    <property type="entry name" value="NLR family CARD domain containing 4"/>
    <property type="match status" value="1"/>
</dbReference>
<dbReference type="FunFam" id="1.10.1900.50:FF:000001">
    <property type="entry name" value="NLR family CARD domain-containing protein 4"/>
    <property type="match status" value="1"/>
</dbReference>
<dbReference type="FunFam" id="3.40.50.300:FF:001292">
    <property type="entry name" value="NLR family CARD domain-containing protein 4"/>
    <property type="match status" value="1"/>
</dbReference>
<dbReference type="Gene3D" id="1.10.1900.50">
    <property type="match status" value="1"/>
</dbReference>
<dbReference type="Gene3D" id="1.10.533.10">
    <property type="entry name" value="Death Domain, Fas"/>
    <property type="match status" value="1"/>
</dbReference>
<dbReference type="Gene3D" id="3.40.50.300">
    <property type="entry name" value="P-loop containing nucleotide triphosphate hydrolases"/>
    <property type="match status" value="1"/>
</dbReference>
<dbReference type="Gene3D" id="3.80.10.10">
    <property type="entry name" value="Ribonuclease Inhibitor"/>
    <property type="match status" value="2"/>
</dbReference>
<dbReference type="InterPro" id="IPR001315">
    <property type="entry name" value="CARD"/>
</dbReference>
<dbReference type="InterPro" id="IPR011029">
    <property type="entry name" value="DEATH-like_dom_sf"/>
</dbReference>
<dbReference type="InterPro" id="IPR032675">
    <property type="entry name" value="LRR_dom_sf"/>
</dbReference>
<dbReference type="InterPro" id="IPR007111">
    <property type="entry name" value="NACHT_NTPase"/>
</dbReference>
<dbReference type="InterPro" id="IPR042220">
    <property type="entry name" value="NLRC4"/>
</dbReference>
<dbReference type="InterPro" id="IPR053882">
    <property type="entry name" value="Nlrc4-like_WHD"/>
</dbReference>
<dbReference type="InterPro" id="IPR040535">
    <property type="entry name" value="NLRC4_HD"/>
</dbReference>
<dbReference type="InterPro" id="IPR027417">
    <property type="entry name" value="P-loop_NTPase"/>
</dbReference>
<dbReference type="PANTHER" id="PTHR47688">
    <property type="entry name" value="NLR FAMILY CARD DOMAIN-CONTAINING PROTEIN 4"/>
    <property type="match status" value="1"/>
</dbReference>
<dbReference type="PANTHER" id="PTHR47688:SF1">
    <property type="entry name" value="NLR FAMILY CARD DOMAIN-CONTAINING PROTEIN 4"/>
    <property type="match status" value="1"/>
</dbReference>
<dbReference type="Pfam" id="PF00619">
    <property type="entry name" value="CARD"/>
    <property type="match status" value="1"/>
</dbReference>
<dbReference type="Pfam" id="PF05729">
    <property type="entry name" value="NACHT"/>
    <property type="match status" value="1"/>
</dbReference>
<dbReference type="Pfam" id="PF22524">
    <property type="entry name" value="Nlrc4-like_WHD"/>
    <property type="match status" value="1"/>
</dbReference>
<dbReference type="Pfam" id="PF17889">
    <property type="entry name" value="NLRC4_HD"/>
    <property type="match status" value="1"/>
</dbReference>
<dbReference type="SUPFAM" id="SSF47986">
    <property type="entry name" value="DEATH domain"/>
    <property type="match status" value="1"/>
</dbReference>
<dbReference type="SUPFAM" id="SSF52540">
    <property type="entry name" value="P-loop containing nucleoside triphosphate hydrolases"/>
    <property type="match status" value="1"/>
</dbReference>
<dbReference type="SUPFAM" id="SSF52047">
    <property type="entry name" value="RNI-like"/>
    <property type="match status" value="1"/>
</dbReference>
<dbReference type="PROSITE" id="PS50209">
    <property type="entry name" value="CARD"/>
    <property type="match status" value="1"/>
</dbReference>
<dbReference type="PROSITE" id="PS50837">
    <property type="entry name" value="NACHT"/>
    <property type="match status" value="1"/>
</dbReference>
<protein>
    <recommendedName>
        <fullName>NLR family CARD domain-containing protein 4</fullName>
    </recommendedName>
    <alternativeName>
        <fullName>Ice protease-activating factor</fullName>
        <shortName>Ipaf</shortName>
    </alternativeName>
</protein>
<sequence length="1023" mass="116142">MNFIKENSQALIQRMGIVVIKQICDDLFALNVLNGEEVAIICSHRVEQDAARDIVHMILKKGSAACNLFLKSLENWNYPVYQDLTGHSLFHQNLEEDLDVLAQSLKDLYNSPVFKNFFPLGEDIDIIFNLQITFTEPVLWRKDHRHHRVEQMTLGSLLEALKSPCLIEGESGKGKSTLLQKIAMLWASGMCPALNQFKLVFFIRLSSARGGLFETLYDQLVNIPDSISKPTFRALLLKLHKKVLFLLDAYNEFHPQNCPEIEALVKENHRFKNMVIVTTTTECLRHIRHVGALTVEVGDMTEDSARVLIREVLINELAEGLLFQMQESRCLRNLMRTPLFVVITCAIQMGSEEFQAHTQTMLFQTFYDLLIQKNRRRHSGGTSGDFVRSLDYCGDLALEGVFSHKFDFELEDVCSMNEDVLVRTGLLCKYTAQRLRPTYKFFHKSFQEYTAGRRLSSLLKSREPEEVSKGNSYLKKMVSISDITSLYGNLLLYTCGSSTEATRAIMRHLAMVCEHGSLQGLSVTKRPLWRQESIQNLRNTTEQDVLKAINVNSFVECGINLFSESISKSELSQEFEAFFQGKSLYINSENIPDYLFDFFKYLPNCVSALDFVKLDFYGRATVSQDKTGENSSGVHTEGPSTYIPSRAVSLFFNWMQKFKTLEVTLRDISKLNKQDIKYLGKIFSSASNLKLYIKRCAAVAGRLSSVLRTCKNIHSLMVEASPLTTEDEQYITSVTDLQNLSIHDLHTQRLPGGLADSLGNLKNLLKLILDDIRLNEEDAKSLAEGLRNLKKMRLLHLTRLSDMGEGMDYIVKSLSEEPCDLQEMKLVDCCLTANSLKILAQNLHNLVKLSVLDMSENYLEKAGSEALQGLIGRLGVLEQLSALMLPWCWDAYISLPNLLKQLEGTPGLVKLGLKNWRLRDEEIRSFGEFLEMNPLRDLQQLDLAGHGVSSDGWLSFMDVFENLKQLVFFDFGTEEFLPDAALVRKLGQVLSKLTLLQEARLTGWELDDYDISVIKGTFKLVTA</sequence>
<keyword id="KW-0053">Apoptosis</keyword>
<keyword id="KW-0067">ATP-binding</keyword>
<keyword id="KW-0963">Cytoplasm</keyword>
<keyword id="KW-0391">Immunity</keyword>
<keyword id="KW-0395">Inflammatory response</keyword>
<keyword id="KW-0399">Innate immunity</keyword>
<keyword id="KW-0433">Leucine-rich repeat</keyword>
<keyword id="KW-0547">Nucleotide-binding</keyword>
<keyword id="KW-0597">Phosphoprotein</keyword>
<keyword id="KW-1185">Reference proteome</keyword>
<keyword id="KW-0677">Repeat</keyword>
<evidence type="ECO:0000250" key="1"/>
<evidence type="ECO:0000250" key="2">
    <source>
        <dbReference type="UniProtKB" id="Q3UP24"/>
    </source>
</evidence>
<evidence type="ECO:0000250" key="3">
    <source>
        <dbReference type="UniProtKB" id="Q9NPP4"/>
    </source>
</evidence>
<evidence type="ECO:0000255" key="4">
    <source>
        <dbReference type="PROSITE-ProRule" id="PRU00046"/>
    </source>
</evidence>
<evidence type="ECO:0000255" key="5">
    <source>
        <dbReference type="PROSITE-ProRule" id="PRU00136"/>
    </source>
</evidence>